<protein>
    <recommendedName>
        <fullName>Uncharacterized protein PA0049</fullName>
    </recommendedName>
</protein>
<evidence type="ECO:0000255" key="1"/>
<evidence type="ECO:0000305" key="2"/>
<sequence length="553" mass="60114">MRYARHASRYSLFTLAVSAALLPGAGWAANGDLAGARKPPSVACSWNREAALSYEERRLDTPLPFSGANVVTHDQTPLAERIVKGAGFDGFEPAFAKRLCAADGRTPVTSYAKALKLVTEEGRALWRAAVDRAQGRRAIPAGALPASDDRMLYWTRLYMTRTLRQWAPSFHLGKAQAQALQWRFERASRGQLDIDLPRRYAADGSRYRRMIISGFDVFTLGTPGTANTGLRNGNPSGATALALDGREFRLADGSLLRIEAYLLPVSYDPFNRGMQEDTLGPWFRPGPRRVDASITISQGGANQFWLEAWNGRFHGSSAGNDGIVYCPADSALPNYVLPLGSVTNPGTAPISLRGSGCNINPPRRWLGYDSASRWRQNLPAQFSKASLPVRQLLAADTWRGIERPPGATSQAAEGFDVTWHTNYDFFPDCANPRTENVPTNGVMNAMPDPSLVLPPNRRICARNGGGGDYLSNESAYRNTVLRDAFRLEIPAGHIHVPVMNNYYTGVPASGGGARNDNAISDARYEAYRSAIVAQTRALLVGVGNALAQGAQAD</sequence>
<gene>
    <name type="ordered locus">PA0049</name>
</gene>
<accession>Q9I783</accession>
<reference key="1">
    <citation type="journal article" date="2000" name="Nature">
        <title>Complete genome sequence of Pseudomonas aeruginosa PAO1, an opportunistic pathogen.</title>
        <authorList>
            <person name="Stover C.K."/>
            <person name="Pham X.-Q.T."/>
            <person name="Erwin A.L."/>
            <person name="Mizoguchi S.D."/>
            <person name="Warrener P."/>
            <person name="Hickey M.J."/>
            <person name="Brinkman F.S.L."/>
            <person name="Hufnagle W.O."/>
            <person name="Kowalik D.J."/>
            <person name="Lagrou M."/>
            <person name="Garber R.L."/>
            <person name="Goltry L."/>
            <person name="Tolentino E."/>
            <person name="Westbrock-Wadman S."/>
            <person name="Yuan Y."/>
            <person name="Brody L.L."/>
            <person name="Coulter S.N."/>
            <person name="Folger K.R."/>
            <person name="Kas A."/>
            <person name="Larbig K."/>
            <person name="Lim R.M."/>
            <person name="Smith K.A."/>
            <person name="Spencer D.H."/>
            <person name="Wong G.K.-S."/>
            <person name="Wu Z."/>
            <person name="Paulsen I.T."/>
            <person name="Reizer J."/>
            <person name="Saier M.H. Jr."/>
            <person name="Hancock R.E.W."/>
            <person name="Lory S."/>
            <person name="Olson M.V."/>
        </authorList>
    </citation>
    <scope>NUCLEOTIDE SEQUENCE [LARGE SCALE GENOMIC DNA]</scope>
    <source>
        <strain>ATCC 15692 / DSM 22644 / CIP 104116 / JCM 14847 / LMG 12228 / 1C / PRS 101 / PAO1</strain>
    </source>
</reference>
<reference evidence="2" key="2">
    <citation type="thesis" date="2005" institute="Ben-Gurion University" country="Israel">
        <title>Biofouling in water treatment systems: effect of membrane properties on biofilm formation.</title>
        <authorList>
            <person name="Liddor M."/>
        </authorList>
    </citation>
    <scope>PROTEIN SEQUENCE OF 258-272</scope>
    <source>
        <strain>ATCC 33467 / type 1 smooth</strain>
        <strain>ATCC 33468 / type 2 mucoid</strain>
    </source>
</reference>
<feature type="signal peptide" evidence="1">
    <location>
        <begin position="1"/>
        <end position="28"/>
    </location>
</feature>
<feature type="chain" id="PRO_0000042120" description="Uncharacterized protein PA0049">
    <location>
        <begin position="29"/>
        <end position="553"/>
    </location>
</feature>
<proteinExistence type="evidence at protein level"/>
<dbReference type="EMBL" id="AE004091">
    <property type="protein sequence ID" value="AAG03439.1"/>
    <property type="molecule type" value="Genomic_DNA"/>
</dbReference>
<dbReference type="PIR" id="D83640">
    <property type="entry name" value="D83640"/>
</dbReference>
<dbReference type="RefSeq" id="NP_248739.1">
    <property type="nucleotide sequence ID" value="NC_002516.2"/>
</dbReference>
<dbReference type="RefSeq" id="WP_003114581.1">
    <property type="nucleotide sequence ID" value="NZ_QZGE01000015.1"/>
</dbReference>
<dbReference type="STRING" id="208964.PA0049"/>
<dbReference type="PaxDb" id="208964-PA0049"/>
<dbReference type="GeneID" id="877595"/>
<dbReference type="KEGG" id="pae:PA0049"/>
<dbReference type="PATRIC" id="fig|208964.12.peg.50"/>
<dbReference type="PseudoCAP" id="PA0049"/>
<dbReference type="HOGENOM" id="CLU_048887_1_0_6"/>
<dbReference type="InParanoid" id="Q9I783"/>
<dbReference type="OrthoDB" id="4555199at2"/>
<dbReference type="PhylomeDB" id="Q9I783"/>
<dbReference type="BioCyc" id="PAER208964:G1FZ6-51-MONOMER"/>
<dbReference type="Proteomes" id="UP000002438">
    <property type="component" value="Chromosome"/>
</dbReference>
<dbReference type="Gene3D" id="3.40.630.20">
    <property type="entry name" value="Peptidase C15, pyroglutamyl peptidase I-like"/>
    <property type="match status" value="1"/>
</dbReference>
<dbReference type="InterPro" id="IPR036440">
    <property type="entry name" value="Peptidase_C15-like_sf"/>
</dbReference>
<dbReference type="SUPFAM" id="SSF53182">
    <property type="entry name" value="Pyrrolidone carboxyl peptidase (pyroglutamate aminopeptidase)"/>
    <property type="match status" value="1"/>
</dbReference>
<name>Y049_PSEAE</name>
<organism>
    <name type="scientific">Pseudomonas aeruginosa (strain ATCC 15692 / DSM 22644 / CIP 104116 / JCM 14847 / LMG 12228 / 1C / PRS 101 / PAO1)</name>
    <dbReference type="NCBI Taxonomy" id="208964"/>
    <lineage>
        <taxon>Bacteria</taxon>
        <taxon>Pseudomonadati</taxon>
        <taxon>Pseudomonadota</taxon>
        <taxon>Gammaproteobacteria</taxon>
        <taxon>Pseudomonadales</taxon>
        <taxon>Pseudomonadaceae</taxon>
        <taxon>Pseudomonas</taxon>
    </lineage>
</organism>
<keyword id="KW-0903">Direct protein sequencing</keyword>
<keyword id="KW-1185">Reference proteome</keyword>
<keyword id="KW-0732">Signal</keyword>